<gene>
    <name evidence="1" type="primary">psbE</name>
</gene>
<accession>Q76IC3</accession>
<accession>Q33C15</accession>
<comment type="function">
    <text evidence="1">This b-type cytochrome is tightly associated with the reaction center of photosystem II (PSII). PSII is a light-driven water:plastoquinone oxidoreductase that uses light energy to abstract electrons from H(2)O, generating O(2) and a proton gradient subsequently used for ATP formation. It consists of a core antenna complex that captures photons, and an electron transfer chain that converts photonic excitation into a charge separation.</text>
</comment>
<comment type="cofactor">
    <cofactor evidence="1">
        <name>heme b</name>
        <dbReference type="ChEBI" id="CHEBI:60344"/>
    </cofactor>
    <text evidence="1">With its partner (PsbF) binds heme. PSII binds additional chlorophylls, carotenoids and specific lipids.</text>
</comment>
<comment type="subunit">
    <text evidence="1">Heterodimer of an alpha subunit and a beta subunit. PSII is composed of 1 copy each of membrane proteins PsbA, PsbB, PsbC, PsbD, PsbE, PsbF, PsbH, PsbI, PsbJ, PsbK, PsbL, PsbM, PsbT, PsbX, PsbY, PsbZ, Psb30/Ycf12, at least 3 peripheral proteins of the oxygen-evolving complex and a large number of cofactors. It forms dimeric complexes.</text>
</comment>
<comment type="subcellular location">
    <subcellularLocation>
        <location evidence="1">Plastid</location>
        <location evidence="1">Chloroplast thylakoid membrane</location>
        <topology evidence="1">Single-pass membrane protein</topology>
    </subcellularLocation>
</comment>
<comment type="similarity">
    <text evidence="1">Belongs to the PsbE/PsbF family.</text>
</comment>
<name>PSBE_NICTO</name>
<dbReference type="EMBL" id="AB098240">
    <property type="protein sequence ID" value="BAC77579.1"/>
    <property type="molecule type" value="Genomic_DNA"/>
</dbReference>
<dbReference type="EMBL" id="AB240139">
    <property type="protein sequence ID" value="BAE48020.1"/>
    <property type="molecule type" value="Genomic_DNA"/>
</dbReference>
<dbReference type="RefSeq" id="YP_398882.1">
    <property type="nucleotide sequence ID" value="NC_007602.1"/>
</dbReference>
<dbReference type="SMR" id="Q76IC3"/>
<dbReference type="GeneID" id="3776371"/>
<dbReference type="KEGG" id="nto:3776371"/>
<dbReference type="OrthoDB" id="1245051at2759"/>
<dbReference type="GO" id="GO:0009535">
    <property type="term" value="C:chloroplast thylakoid membrane"/>
    <property type="evidence" value="ECO:0007669"/>
    <property type="project" value="UniProtKB-SubCell"/>
</dbReference>
<dbReference type="GO" id="GO:0009539">
    <property type="term" value="C:photosystem II reaction center"/>
    <property type="evidence" value="ECO:0007669"/>
    <property type="project" value="InterPro"/>
</dbReference>
<dbReference type="GO" id="GO:0009055">
    <property type="term" value="F:electron transfer activity"/>
    <property type="evidence" value="ECO:0007669"/>
    <property type="project" value="UniProtKB-UniRule"/>
</dbReference>
<dbReference type="GO" id="GO:0020037">
    <property type="term" value="F:heme binding"/>
    <property type="evidence" value="ECO:0007669"/>
    <property type="project" value="InterPro"/>
</dbReference>
<dbReference type="GO" id="GO:0005506">
    <property type="term" value="F:iron ion binding"/>
    <property type="evidence" value="ECO:0007669"/>
    <property type="project" value="UniProtKB-UniRule"/>
</dbReference>
<dbReference type="GO" id="GO:0009767">
    <property type="term" value="P:photosynthetic electron transport chain"/>
    <property type="evidence" value="ECO:0007669"/>
    <property type="project" value="InterPro"/>
</dbReference>
<dbReference type="Gene3D" id="1.20.5.860">
    <property type="entry name" value="Photosystem II cytochrome b559, alpha subunit"/>
    <property type="match status" value="1"/>
</dbReference>
<dbReference type="HAMAP" id="MF_00642">
    <property type="entry name" value="PSII_PsbE"/>
    <property type="match status" value="1"/>
</dbReference>
<dbReference type="InterPro" id="IPR006217">
    <property type="entry name" value="PSII_cyt_b559_asu"/>
</dbReference>
<dbReference type="InterPro" id="IPR037025">
    <property type="entry name" value="PSII_cyt_b559_asu_sf"/>
</dbReference>
<dbReference type="InterPro" id="IPR006216">
    <property type="entry name" value="PSII_cyt_b559_CS"/>
</dbReference>
<dbReference type="InterPro" id="IPR013081">
    <property type="entry name" value="PSII_cyt_b559_N"/>
</dbReference>
<dbReference type="InterPro" id="IPR013082">
    <property type="entry name" value="PSII_cytb559_asu_lum"/>
</dbReference>
<dbReference type="NCBIfam" id="TIGR01332">
    <property type="entry name" value="cyt_b559_alpha"/>
    <property type="match status" value="1"/>
</dbReference>
<dbReference type="PANTHER" id="PTHR33391">
    <property type="entry name" value="CYTOCHROME B559 SUBUNIT BETA-RELATED"/>
    <property type="match status" value="1"/>
</dbReference>
<dbReference type="PANTHER" id="PTHR33391:SF9">
    <property type="entry name" value="CYTOCHROME B559 SUBUNIT BETA-RELATED"/>
    <property type="match status" value="1"/>
</dbReference>
<dbReference type="Pfam" id="PF00283">
    <property type="entry name" value="Cytochrom_B559"/>
    <property type="match status" value="1"/>
</dbReference>
<dbReference type="Pfam" id="PF00284">
    <property type="entry name" value="Cytochrom_B559a"/>
    <property type="match status" value="1"/>
</dbReference>
<dbReference type="PIRSF" id="PIRSF000036">
    <property type="entry name" value="PsbE"/>
    <property type="match status" value="1"/>
</dbReference>
<dbReference type="SUPFAM" id="SSF161045">
    <property type="entry name" value="Cytochrome b559 subunits"/>
    <property type="match status" value="1"/>
</dbReference>
<dbReference type="PROSITE" id="PS00537">
    <property type="entry name" value="CYTOCHROME_B559"/>
    <property type="match status" value="1"/>
</dbReference>
<proteinExistence type="inferred from homology"/>
<protein>
    <recommendedName>
        <fullName evidence="1">Cytochrome b559 subunit alpha</fullName>
    </recommendedName>
    <alternativeName>
        <fullName evidence="1">PSII reaction center subunit V</fullName>
    </alternativeName>
</protein>
<evidence type="ECO:0000255" key="1">
    <source>
        <dbReference type="HAMAP-Rule" id="MF_00642"/>
    </source>
</evidence>
<evidence type="ECO:0000305" key="2"/>
<keyword id="KW-0150">Chloroplast</keyword>
<keyword id="KW-0249">Electron transport</keyword>
<keyword id="KW-0349">Heme</keyword>
<keyword id="KW-0408">Iron</keyword>
<keyword id="KW-0472">Membrane</keyword>
<keyword id="KW-0479">Metal-binding</keyword>
<keyword id="KW-0602">Photosynthesis</keyword>
<keyword id="KW-0604">Photosystem II</keyword>
<keyword id="KW-0934">Plastid</keyword>
<keyword id="KW-0793">Thylakoid</keyword>
<keyword id="KW-0812">Transmembrane</keyword>
<keyword id="KW-1133">Transmembrane helix</keyword>
<keyword id="KW-0813">Transport</keyword>
<feature type="chain" id="PRO_0000200321" description="Cytochrome b559 subunit alpha">
    <location>
        <begin position="1"/>
        <end position="83"/>
    </location>
</feature>
<feature type="transmembrane region" description="Helical" evidence="1">
    <location>
        <begin position="21"/>
        <end position="35"/>
    </location>
</feature>
<feature type="binding site" description="axial binding residue" evidence="1">
    <location>
        <position position="23"/>
    </location>
    <ligand>
        <name>heme</name>
        <dbReference type="ChEBI" id="CHEBI:30413"/>
        <note>ligand shared with beta subunit</note>
    </ligand>
    <ligandPart>
        <name>Fe</name>
        <dbReference type="ChEBI" id="CHEBI:18248"/>
    </ligandPart>
</feature>
<feature type="sequence conflict" description="In Ref. 1; BAC77579." evidence="2" ref="1">
    <original>P</original>
    <variation>S</variation>
    <location>
        <position position="72"/>
    </location>
</feature>
<sequence>MSGSTGERSFADIITSIRYWVIHSITIPSLFIAGWLFVSTGLAYDVFGSPRPNEYFTESRQGIPLITGRFDPLEQLDEFSRSF</sequence>
<reference key="1">
    <citation type="journal article" date="2003" name="Mol. Biol. Evol.">
        <title>Identification of RNA editing sites in chloroplast transcripts from the maternal and paternal progenitors of tobacco (Nicotiana tabacum): comparative analysis shows the involvement of distinct trans-factors for ndhB editing.</title>
        <authorList>
            <person name="Sasaki T."/>
            <person name="Yukawa Y."/>
            <person name="Miyamoto T."/>
            <person name="Obokata J."/>
            <person name="Sugiura M."/>
        </authorList>
    </citation>
    <scope>NUCLEOTIDE SEQUENCE [GENOMIC DNA]</scope>
    <source>
        <tissue>Leaf</tissue>
    </source>
</reference>
<reference key="2">
    <citation type="journal article" date="2006" name="Mol. Genet. Genomics">
        <title>The chloroplast genome of Nicotiana sylvestris and Nicotiana tomentosiformis: complete sequencing confirms that the Nicotiana sylvestris progenitor is the maternal genome donor of Nicotiana tabacum.</title>
        <authorList>
            <person name="Yukawa M."/>
            <person name="Tsudzuki T."/>
            <person name="Sugiura M."/>
        </authorList>
    </citation>
    <scope>NUCLEOTIDE SEQUENCE [LARGE SCALE GENOMIC DNA]</scope>
</reference>
<organism>
    <name type="scientific">Nicotiana tomentosiformis</name>
    <name type="common">Tobacco</name>
    <dbReference type="NCBI Taxonomy" id="4098"/>
    <lineage>
        <taxon>Eukaryota</taxon>
        <taxon>Viridiplantae</taxon>
        <taxon>Streptophyta</taxon>
        <taxon>Embryophyta</taxon>
        <taxon>Tracheophyta</taxon>
        <taxon>Spermatophyta</taxon>
        <taxon>Magnoliopsida</taxon>
        <taxon>eudicotyledons</taxon>
        <taxon>Gunneridae</taxon>
        <taxon>Pentapetalae</taxon>
        <taxon>asterids</taxon>
        <taxon>lamiids</taxon>
        <taxon>Solanales</taxon>
        <taxon>Solanaceae</taxon>
        <taxon>Nicotianoideae</taxon>
        <taxon>Nicotianeae</taxon>
        <taxon>Nicotiana</taxon>
    </lineage>
</organism>
<geneLocation type="chloroplast"/>